<dbReference type="EC" id="5.6.2.3" evidence="1"/>
<dbReference type="EMBL" id="X64583">
    <property type="protein sequence ID" value="CAA45870.1"/>
    <property type="molecule type" value="Genomic_DNA"/>
</dbReference>
<dbReference type="EMBL" id="X60499">
    <property type="protein sequence ID" value="CAA43022.1"/>
    <property type="molecule type" value="Genomic_DNA"/>
</dbReference>
<dbReference type="EMBL" id="CU329670">
    <property type="protein sequence ID" value="CAA93221.1"/>
    <property type="molecule type" value="Genomic_DNA"/>
</dbReference>
<dbReference type="PIR" id="S22660">
    <property type="entry name" value="S22660"/>
</dbReference>
<dbReference type="RefSeq" id="NP_593025.1">
    <property type="nucleotide sequence ID" value="NM_001018424.2"/>
</dbReference>
<dbReference type="SMR" id="P26659"/>
<dbReference type="FunCoup" id="P26659">
    <property type="interactions" value="896"/>
</dbReference>
<dbReference type="IntAct" id="P26659">
    <property type="interactions" value="1"/>
</dbReference>
<dbReference type="STRING" id="284812.P26659"/>
<dbReference type="PaxDb" id="4896-SPAC1D4.12.1"/>
<dbReference type="EnsemblFungi" id="SPAC1D4.12.1">
    <property type="protein sequence ID" value="SPAC1D4.12.1:pep"/>
    <property type="gene ID" value="SPAC1D4.12"/>
</dbReference>
<dbReference type="GeneID" id="2542203"/>
<dbReference type="KEGG" id="spo:2542203"/>
<dbReference type="PomBase" id="SPAC1D4.12">
    <property type="gene designation" value="rad15"/>
</dbReference>
<dbReference type="VEuPathDB" id="FungiDB:SPAC1D4.12"/>
<dbReference type="eggNOG" id="KOG1131">
    <property type="taxonomic scope" value="Eukaryota"/>
</dbReference>
<dbReference type="HOGENOM" id="CLU_011312_1_0_1"/>
<dbReference type="InParanoid" id="P26659"/>
<dbReference type="OMA" id="WQTMGIL"/>
<dbReference type="PhylomeDB" id="P26659"/>
<dbReference type="Reactome" id="R-SPO-113418">
    <property type="pathway name" value="Formation of the Early Elongation Complex"/>
</dbReference>
<dbReference type="Reactome" id="R-SPO-5696395">
    <property type="pathway name" value="Formation of Incision Complex in GG-NER"/>
</dbReference>
<dbReference type="Reactome" id="R-SPO-5696400">
    <property type="pathway name" value="Dual Incision in GG-NER"/>
</dbReference>
<dbReference type="Reactome" id="R-SPO-674695">
    <property type="pathway name" value="RNA Polymerase II Pre-transcription Events"/>
</dbReference>
<dbReference type="Reactome" id="R-SPO-6781823">
    <property type="pathway name" value="Formation of TC-NER Pre-Incision Complex"/>
</dbReference>
<dbReference type="Reactome" id="R-SPO-6782135">
    <property type="pathway name" value="Dual incision in TC-NER"/>
</dbReference>
<dbReference type="Reactome" id="R-SPO-6782210">
    <property type="pathway name" value="Gap-filling DNA repair synthesis and ligation in TC-NER"/>
</dbReference>
<dbReference type="Reactome" id="R-SPO-6796648">
    <property type="pathway name" value="TP53 Regulates Transcription of DNA Repair Genes"/>
</dbReference>
<dbReference type="Reactome" id="R-SPO-72086">
    <property type="pathway name" value="mRNA Capping"/>
</dbReference>
<dbReference type="Reactome" id="R-SPO-73772">
    <property type="pathway name" value="RNA Polymerase I Promoter Escape"/>
</dbReference>
<dbReference type="Reactome" id="R-SPO-73776">
    <property type="pathway name" value="RNA Polymerase II Promoter Escape"/>
</dbReference>
<dbReference type="Reactome" id="R-SPO-73779">
    <property type="pathway name" value="RNA Polymerase II Transcription Pre-Initiation And Promoter Opening"/>
</dbReference>
<dbReference type="Reactome" id="R-SPO-75953">
    <property type="pathway name" value="RNA Polymerase II Transcription Initiation"/>
</dbReference>
<dbReference type="Reactome" id="R-SPO-76042">
    <property type="pathway name" value="RNA Polymerase II Transcription Initiation And Promoter Clearance"/>
</dbReference>
<dbReference type="Reactome" id="R-SPO-77075">
    <property type="pathway name" value="RNA Pol II CTD phosphorylation and interaction with CE"/>
</dbReference>
<dbReference type="PRO" id="PR:P26659"/>
<dbReference type="Proteomes" id="UP000002485">
    <property type="component" value="Chromosome I"/>
</dbReference>
<dbReference type="GO" id="GO:0005829">
    <property type="term" value="C:cytosol"/>
    <property type="evidence" value="ECO:0007005"/>
    <property type="project" value="PomBase"/>
</dbReference>
<dbReference type="GO" id="GO:0000112">
    <property type="term" value="C:nucleotide-excision repair factor 3 complex"/>
    <property type="evidence" value="ECO:0000316"/>
    <property type="project" value="PomBase"/>
</dbReference>
<dbReference type="GO" id="GO:0005634">
    <property type="term" value="C:nucleus"/>
    <property type="evidence" value="ECO:0007005"/>
    <property type="project" value="PomBase"/>
</dbReference>
<dbReference type="GO" id="GO:0000439">
    <property type="term" value="C:transcription factor TFIIH core complex"/>
    <property type="evidence" value="ECO:0000266"/>
    <property type="project" value="PomBase"/>
</dbReference>
<dbReference type="GO" id="GO:0005675">
    <property type="term" value="C:transcription factor TFIIH holo complex"/>
    <property type="evidence" value="ECO:0000266"/>
    <property type="project" value="PomBase"/>
</dbReference>
<dbReference type="GO" id="GO:0051539">
    <property type="term" value="F:4 iron, 4 sulfur cluster binding"/>
    <property type="evidence" value="ECO:0007669"/>
    <property type="project" value="UniProtKB-KW"/>
</dbReference>
<dbReference type="GO" id="GO:0043139">
    <property type="term" value="F:5'-3' DNA helicase activity"/>
    <property type="evidence" value="ECO:0000266"/>
    <property type="project" value="PomBase"/>
</dbReference>
<dbReference type="GO" id="GO:0005524">
    <property type="term" value="F:ATP binding"/>
    <property type="evidence" value="ECO:0000305"/>
    <property type="project" value="PomBase"/>
</dbReference>
<dbReference type="GO" id="GO:0016887">
    <property type="term" value="F:ATP hydrolysis activity"/>
    <property type="evidence" value="ECO:0007669"/>
    <property type="project" value="RHEA"/>
</dbReference>
<dbReference type="GO" id="GO:0003684">
    <property type="term" value="F:damaged DNA binding"/>
    <property type="evidence" value="ECO:0000318"/>
    <property type="project" value="GO_Central"/>
</dbReference>
<dbReference type="GO" id="GO:0003678">
    <property type="term" value="F:DNA helicase activity"/>
    <property type="evidence" value="ECO:0000318"/>
    <property type="project" value="GO_Central"/>
</dbReference>
<dbReference type="GO" id="GO:0046872">
    <property type="term" value="F:metal ion binding"/>
    <property type="evidence" value="ECO:0007669"/>
    <property type="project" value="UniProtKB-KW"/>
</dbReference>
<dbReference type="GO" id="GO:0016251">
    <property type="term" value="F:RNA polymerase II general transcription initiation factor activity"/>
    <property type="evidence" value="ECO:0000269"/>
    <property type="project" value="PomBase"/>
</dbReference>
<dbReference type="GO" id="GO:0006289">
    <property type="term" value="P:nucleotide-excision repair"/>
    <property type="evidence" value="ECO:0000316"/>
    <property type="project" value="PomBase"/>
</dbReference>
<dbReference type="GO" id="GO:0045951">
    <property type="term" value="P:positive regulation of mitotic recombination"/>
    <property type="evidence" value="ECO:0000318"/>
    <property type="project" value="GO_Central"/>
</dbReference>
<dbReference type="GO" id="GO:0006366">
    <property type="term" value="P:transcription by RNA polymerase II"/>
    <property type="evidence" value="ECO:0000318"/>
    <property type="project" value="GO_Central"/>
</dbReference>
<dbReference type="GO" id="GO:0006367">
    <property type="term" value="P:transcription initiation at RNA polymerase II promoter"/>
    <property type="evidence" value="ECO:0000269"/>
    <property type="project" value="PomBase"/>
</dbReference>
<dbReference type="CDD" id="cd18788">
    <property type="entry name" value="SF2_C_XPD"/>
    <property type="match status" value="1"/>
</dbReference>
<dbReference type="FunFam" id="3.40.50.300:FF:000135">
    <property type="entry name" value="DNA repair helicase RAD3, putative"/>
    <property type="match status" value="1"/>
</dbReference>
<dbReference type="FunFam" id="3.40.50.300:FF:000128">
    <property type="entry name" value="Putative DNA repair helicase RAD3"/>
    <property type="match status" value="1"/>
</dbReference>
<dbReference type="FunFam" id="3.40.50.300:FF:000381">
    <property type="entry name" value="TFIIH basal transcription factor complex helicase subunit"/>
    <property type="match status" value="1"/>
</dbReference>
<dbReference type="Gene3D" id="3.40.50.300">
    <property type="entry name" value="P-loop containing nucleotide triphosphate hydrolases"/>
    <property type="match status" value="2"/>
</dbReference>
<dbReference type="InterPro" id="IPR006555">
    <property type="entry name" value="ATP-dep_Helicase_C"/>
</dbReference>
<dbReference type="InterPro" id="IPR045028">
    <property type="entry name" value="DinG/Rad3-like"/>
</dbReference>
<dbReference type="InterPro" id="IPR010643">
    <property type="entry name" value="HBB"/>
</dbReference>
<dbReference type="InterPro" id="IPR014013">
    <property type="entry name" value="Helic_SF1/SF2_ATP-bd_DinG/Rad3"/>
</dbReference>
<dbReference type="InterPro" id="IPR006554">
    <property type="entry name" value="Helicase-like_DEXD_c2"/>
</dbReference>
<dbReference type="InterPro" id="IPR027417">
    <property type="entry name" value="P-loop_NTPase"/>
</dbReference>
<dbReference type="InterPro" id="IPR010614">
    <property type="entry name" value="RAD3-like_helicase_DEAD"/>
</dbReference>
<dbReference type="InterPro" id="IPR013020">
    <property type="entry name" value="Rad3/Chl1-like"/>
</dbReference>
<dbReference type="InterPro" id="IPR001945">
    <property type="entry name" value="RAD3/XPD"/>
</dbReference>
<dbReference type="NCBIfam" id="TIGR00604">
    <property type="entry name" value="rad3"/>
    <property type="match status" value="1"/>
</dbReference>
<dbReference type="PANTHER" id="PTHR11472">
    <property type="entry name" value="DNA REPAIR DEAD HELICASE RAD3/XP-D SUBFAMILY MEMBER"/>
    <property type="match status" value="1"/>
</dbReference>
<dbReference type="PANTHER" id="PTHR11472:SF1">
    <property type="entry name" value="GENERAL TRANSCRIPTION AND DNA REPAIR FACTOR IIH HELICASE SUBUNIT XPD"/>
    <property type="match status" value="1"/>
</dbReference>
<dbReference type="Pfam" id="PF06733">
    <property type="entry name" value="DEAD_2"/>
    <property type="match status" value="1"/>
</dbReference>
<dbReference type="Pfam" id="PF06777">
    <property type="entry name" value="HBB"/>
    <property type="match status" value="1"/>
</dbReference>
<dbReference type="Pfam" id="PF13307">
    <property type="entry name" value="Helicase_C_2"/>
    <property type="match status" value="1"/>
</dbReference>
<dbReference type="PRINTS" id="PR00852">
    <property type="entry name" value="XRODRMPGMNTD"/>
</dbReference>
<dbReference type="SMART" id="SM00488">
    <property type="entry name" value="DEXDc2"/>
    <property type="match status" value="1"/>
</dbReference>
<dbReference type="SMART" id="SM00491">
    <property type="entry name" value="HELICc2"/>
    <property type="match status" value="1"/>
</dbReference>
<dbReference type="SUPFAM" id="SSF52540">
    <property type="entry name" value="P-loop containing nucleoside triphosphate hydrolases"/>
    <property type="match status" value="2"/>
</dbReference>
<dbReference type="PROSITE" id="PS51193">
    <property type="entry name" value="HELICASE_ATP_BIND_2"/>
    <property type="match status" value="1"/>
</dbReference>
<proteinExistence type="evidence at protein level"/>
<feature type="chain" id="PRO_0000101984" description="General transcription and DNA repair factor IIH helicase subunit XPD">
    <location>
        <begin position="1"/>
        <end position="772"/>
    </location>
</feature>
<feature type="domain" description="Helicase ATP-binding" evidence="3">
    <location>
        <begin position="7"/>
        <end position="283"/>
    </location>
</feature>
<feature type="short sequence motif" description="DEAH box">
    <location>
        <begin position="233"/>
        <end position="236"/>
    </location>
</feature>
<feature type="binding site" evidence="3">
    <location>
        <begin position="42"/>
        <end position="49"/>
    </location>
    <ligand>
        <name>ATP</name>
        <dbReference type="ChEBI" id="CHEBI:30616"/>
    </ligand>
</feature>
<feature type="binding site" evidence="2">
    <location>
        <position position="115"/>
    </location>
    <ligand>
        <name>[4Fe-4S] cluster</name>
        <dbReference type="ChEBI" id="CHEBI:49883"/>
    </ligand>
</feature>
<feature type="binding site" evidence="2">
    <location>
        <position position="133"/>
    </location>
    <ligand>
        <name>[4Fe-4S] cluster</name>
        <dbReference type="ChEBI" id="CHEBI:49883"/>
    </ligand>
</feature>
<feature type="binding site" evidence="2">
    <location>
        <position position="154"/>
    </location>
    <ligand>
        <name>[4Fe-4S] cluster</name>
        <dbReference type="ChEBI" id="CHEBI:49883"/>
    </ligand>
</feature>
<feature type="binding site" evidence="2">
    <location>
        <position position="189"/>
    </location>
    <ligand>
        <name>[4Fe-4S] cluster</name>
        <dbReference type="ChEBI" id="CHEBI:49883"/>
    </ligand>
</feature>
<feature type="mutagenesis site" description="Very UV sensitive." evidence="6">
    <original>K</original>
    <variation>R</variation>
    <location>
        <position position="48"/>
    </location>
</feature>
<feature type="sequence conflict" description="In Ref. 1; CAA45870." evidence="12" ref="1">
    <original>S</original>
    <variation>N</variation>
    <location>
        <position position="225"/>
    </location>
</feature>
<feature type="sequence conflict" description="In Ref. 2; CAA43022." evidence="12" ref="2">
    <original>S</original>
    <variation>T</variation>
    <location>
        <position position="588"/>
    </location>
</feature>
<keyword id="KW-0004">4Fe-4S</keyword>
<keyword id="KW-0067">ATP-binding</keyword>
<keyword id="KW-0227">DNA damage</keyword>
<keyword id="KW-0234">DNA repair</keyword>
<keyword id="KW-0238">DNA-binding</keyword>
<keyword id="KW-0347">Helicase</keyword>
<keyword id="KW-0378">Hydrolase</keyword>
<keyword id="KW-0408">Iron</keyword>
<keyword id="KW-0411">Iron-sulfur</keyword>
<keyword id="KW-0413">Isomerase</keyword>
<keyword id="KW-0479">Metal-binding</keyword>
<keyword id="KW-0547">Nucleotide-binding</keyword>
<keyword id="KW-0539">Nucleus</keyword>
<keyword id="KW-1185">Reference proteome</keyword>
<sequence length="772" mass="88149">MKFYIDDLPILFPYPRIYPEQYQYMCDLKHSLDAGGIALLEMPSGTGKTISLLSLIVSYQQHYPEHRKLIYCSRTMSEIDKALAELKRLMAYRTSQLGYEEPFLGLGLTSRKNLCLHPSVRREKNGNVVDARCRSLTAGFVREQRLAGMDVPTCEFHDNLEDLEPHSLISNGVWTLDDITEYGEKTTRCPYFTVRRMLPFCNVIIYSYHYLLDPKIAERVSRELSKDCIVVFDEAHNIDNVCIESLSIDLTESSLRKASKSILSLEQKVNEVKQSDSKKLQDEYQKLVRGLQDANAANDEDQFMANPVLPEDVLKEAVPGNIRRAEHFIAFLKRFVEYLKTRMKVLHVIAETPTSFLQHVKDITFIDKKPLRFCAERLTSLVRALQISLVEDFHSLQQVVAFATLVATYERGFILILEPFETENATVPNPILRFSCLDASIAIKPVFERFRSVIITSGTLSPLDMYPKMLQFNTVMQESYGMSLARNCFLPMVVTRGSDQVAISSKFEARNDPSVVRNYGNILVEFSKITPDGLVAFFPSYLYLESIVSSWQSMGILDEVWKYKLILVETPDPHETTLALETYRAACSNGRGAVLLSVARGKVSEGVDFDHHYGRAVIMFGIPYQYTESRVLKARLEFLRDTYQIREADFLTFDAMRHAAQCLGRVLRGKDDHGIMVLADKRYGRSDKRTKLPKWIQQYITEGATNLSTDMSLALAKKFLRTMAQPFTASDQEGISWWSLDDLLIHQKKALKSAAIEQSKHEDEMDIDVVET</sequence>
<comment type="function">
    <text evidence="6 8">ATP-dependent 5'-3' DNA helicase, component of the general transcription and DNA repair factor IIH (TFIIH) core complex, which is involved in general and transcription-coupled nucleotide excision repair (NER) of damaged DNA and, when complexed to TFIIK, in RNA transcription by RNA polymerase II. In NER, TFIIH acts by opening DNA around the lesion to allow the excision of the damaged oligonucleotide and its replacement by a new DNA fragment. The ATP-dependent helicase activity of XPD/rad15 is required for DNA opening. In transcription, TFIIH has an essential role in transcription initiation. When the pre-initiation complex (PIC) has been established, TFIIH is required for promoter opening and promoter escape. Phosphorylation of the C-terminal tail (CTD) of the largest subunit of RNA polymerase II by the kinase module TFIIK controls the initiation of transcription. XPD/rad15 acts by forming a bridge between TFIIK and the core-TFIIH complex. Involved in the maintenance of the fidelity of DNA replication.</text>
</comment>
<comment type="catalytic activity">
    <reaction evidence="1">
        <text>Couples ATP hydrolysis with the unwinding of duplex DNA at the replication fork by translocating in the 5'-3' direction. This creates two antiparallel DNA single strands (ssDNA). The leading ssDNA polymer is the template for DNA polymerase III holoenzyme which synthesizes a continuous strand.</text>
        <dbReference type="EC" id="5.6.2.3"/>
    </reaction>
</comment>
<comment type="catalytic activity">
    <reaction evidence="1">
        <text>ATP + H2O = ADP + phosphate + H(+)</text>
        <dbReference type="Rhea" id="RHEA:13065"/>
        <dbReference type="ChEBI" id="CHEBI:15377"/>
        <dbReference type="ChEBI" id="CHEBI:15378"/>
        <dbReference type="ChEBI" id="CHEBI:30616"/>
        <dbReference type="ChEBI" id="CHEBI:43474"/>
        <dbReference type="ChEBI" id="CHEBI:456216"/>
        <dbReference type="EC" id="5.6.2.3"/>
    </reaction>
</comment>
<comment type="cofactor">
    <cofactor evidence="1">
        <name>[4Fe-4S] cluster</name>
        <dbReference type="ChEBI" id="CHEBI:49883"/>
    </cofactor>
    <text evidence="1">Binds 1 [4Fe-4S] cluster.</text>
</comment>
<comment type="subunit">
    <text evidence="5">Component of the 7-subunit TFIIH core complex composed of XPB/ptr8, XPD/rad15, ssl1, tfb1, tfb2, tfb4 and tfb5, which is active in NER. The core complex associates with the 3-subunit CTD-kinase module TFIIK composed of mcs2/cyclin H, mcs6/cdk7 and pmh1/tfb3 to form the 10-subunit holoenzyme (holo-TFIIH) active in transcription.</text>
</comment>
<comment type="subcellular location">
    <subcellularLocation>
        <location evidence="7">Nucleus</location>
    </subcellularLocation>
</comment>
<comment type="disruption phenotype">
    <text evidence="4 6">Essential, it cannot be deleted (PubMed:1319571, PubMed:1534406).</text>
</comment>
<comment type="similarity">
    <text evidence="12">Belongs to the helicase family. RAD3/XPD subfamily.</text>
</comment>
<evidence type="ECO:0000250" key="1">
    <source>
        <dbReference type="UniProtKB" id="P06839"/>
    </source>
</evidence>
<evidence type="ECO:0000250" key="2">
    <source>
        <dbReference type="UniProtKB" id="P18074"/>
    </source>
</evidence>
<evidence type="ECO:0000255" key="3">
    <source>
        <dbReference type="PROSITE-ProRule" id="PRU00541"/>
    </source>
</evidence>
<evidence type="ECO:0000269" key="4">
    <source>
    </source>
</evidence>
<evidence type="ECO:0000269" key="5">
    <source>
    </source>
</evidence>
<evidence type="ECO:0000269" key="6">
    <source>
    </source>
</evidence>
<evidence type="ECO:0000269" key="7">
    <source>
    </source>
</evidence>
<evidence type="ECO:0000269" key="8">
    <source>
    </source>
</evidence>
<evidence type="ECO:0000303" key="9">
    <source>
    </source>
</evidence>
<evidence type="ECO:0000303" key="10">
    <source>
    </source>
</evidence>
<evidence type="ECO:0000303" key="11">
    <source>
    </source>
</evidence>
<evidence type="ECO:0000305" key="12"/>
<evidence type="ECO:0000305" key="13">
    <source>
    </source>
</evidence>
<evidence type="ECO:0000312" key="14">
    <source>
        <dbReference type="PomBase" id="SPAC1D4.12"/>
    </source>
</evidence>
<reference key="1">
    <citation type="journal article" date="1992" name="Nucleic Acids Res.">
        <title>The Schizosaccharomyces pombe rhp3+ gene required for DNA repair and cell viability is functionally interchangeable with the RAD3 gene of Saccharomyces cerevisiae.</title>
        <authorList>
            <person name="Reynolds P.R."/>
            <person name="Biggar S."/>
            <person name="Prakash L."/>
            <person name="Prakash S."/>
        </authorList>
    </citation>
    <scope>NUCLEOTIDE SEQUENCE [GENOMIC DNA]</scope>
    <scope>FUNCTION</scope>
    <scope>DISRUPTION PHENOTYPE</scope>
    <scope>MUTAGENESIS OF LYS-48</scope>
</reference>
<reference key="2">
    <citation type="journal article" date="1992" name="Nucleic Acids Res.">
        <title>Cloning and characterisation of the S. pombe rad15 gene, a homologue to the S. cerevisiae RAD3 and human ERCC2 genes.</title>
        <authorList>
            <person name="Murray J.M."/>
            <person name="Doe C."/>
            <person name="Schenk P."/>
            <person name="Carr A.M."/>
            <person name="Lehmann A.R."/>
            <person name="Watts F.Z."/>
        </authorList>
    </citation>
    <scope>NUCLEOTIDE SEQUENCE [GENOMIC DNA]</scope>
    <scope>DISRUPTION PHENOTYPE</scope>
</reference>
<reference key="3">
    <citation type="journal article" date="2002" name="Nature">
        <title>The genome sequence of Schizosaccharomyces pombe.</title>
        <authorList>
            <person name="Wood V."/>
            <person name="Gwilliam R."/>
            <person name="Rajandream M.A."/>
            <person name="Lyne M.H."/>
            <person name="Lyne R."/>
            <person name="Stewart A."/>
            <person name="Sgouros J.G."/>
            <person name="Peat N."/>
            <person name="Hayles J."/>
            <person name="Baker S.G."/>
            <person name="Basham D."/>
            <person name="Bowman S."/>
            <person name="Brooks K."/>
            <person name="Brown D."/>
            <person name="Brown S."/>
            <person name="Chillingworth T."/>
            <person name="Churcher C.M."/>
            <person name="Collins M."/>
            <person name="Connor R."/>
            <person name="Cronin A."/>
            <person name="Davis P."/>
            <person name="Feltwell T."/>
            <person name="Fraser A."/>
            <person name="Gentles S."/>
            <person name="Goble A."/>
            <person name="Hamlin N."/>
            <person name="Harris D.E."/>
            <person name="Hidalgo J."/>
            <person name="Hodgson G."/>
            <person name="Holroyd S."/>
            <person name="Hornsby T."/>
            <person name="Howarth S."/>
            <person name="Huckle E.J."/>
            <person name="Hunt S."/>
            <person name="Jagels K."/>
            <person name="James K.D."/>
            <person name="Jones L."/>
            <person name="Jones M."/>
            <person name="Leather S."/>
            <person name="McDonald S."/>
            <person name="McLean J."/>
            <person name="Mooney P."/>
            <person name="Moule S."/>
            <person name="Mungall K.L."/>
            <person name="Murphy L.D."/>
            <person name="Niblett D."/>
            <person name="Odell C."/>
            <person name="Oliver K."/>
            <person name="O'Neil S."/>
            <person name="Pearson D."/>
            <person name="Quail M.A."/>
            <person name="Rabbinowitsch E."/>
            <person name="Rutherford K.M."/>
            <person name="Rutter S."/>
            <person name="Saunders D."/>
            <person name="Seeger K."/>
            <person name="Sharp S."/>
            <person name="Skelton J."/>
            <person name="Simmonds M.N."/>
            <person name="Squares R."/>
            <person name="Squares S."/>
            <person name="Stevens K."/>
            <person name="Taylor K."/>
            <person name="Taylor R.G."/>
            <person name="Tivey A."/>
            <person name="Walsh S.V."/>
            <person name="Warren T."/>
            <person name="Whitehead S."/>
            <person name="Woodward J.R."/>
            <person name="Volckaert G."/>
            <person name="Aert R."/>
            <person name="Robben J."/>
            <person name="Grymonprez B."/>
            <person name="Weltjens I."/>
            <person name="Vanstreels E."/>
            <person name="Rieger M."/>
            <person name="Schaefer M."/>
            <person name="Mueller-Auer S."/>
            <person name="Gabel C."/>
            <person name="Fuchs M."/>
            <person name="Duesterhoeft A."/>
            <person name="Fritzc C."/>
            <person name="Holzer E."/>
            <person name="Moestl D."/>
            <person name="Hilbert H."/>
            <person name="Borzym K."/>
            <person name="Langer I."/>
            <person name="Beck A."/>
            <person name="Lehrach H."/>
            <person name="Reinhardt R."/>
            <person name="Pohl T.M."/>
            <person name="Eger P."/>
            <person name="Zimmermann W."/>
            <person name="Wedler H."/>
            <person name="Wambutt R."/>
            <person name="Purnelle B."/>
            <person name="Goffeau A."/>
            <person name="Cadieu E."/>
            <person name="Dreano S."/>
            <person name="Gloux S."/>
            <person name="Lelaure V."/>
            <person name="Mottier S."/>
            <person name="Galibert F."/>
            <person name="Aves S.J."/>
            <person name="Xiang Z."/>
            <person name="Hunt C."/>
            <person name="Moore K."/>
            <person name="Hurst S.M."/>
            <person name="Lucas M."/>
            <person name="Rochet M."/>
            <person name="Gaillardin C."/>
            <person name="Tallada V.A."/>
            <person name="Garzon A."/>
            <person name="Thode G."/>
            <person name="Daga R.R."/>
            <person name="Cruzado L."/>
            <person name="Jimenez J."/>
            <person name="Sanchez M."/>
            <person name="del Rey F."/>
            <person name="Benito J."/>
            <person name="Dominguez A."/>
            <person name="Revuelta J.L."/>
            <person name="Moreno S."/>
            <person name="Armstrong J."/>
            <person name="Forsburg S.L."/>
            <person name="Cerutti L."/>
            <person name="Lowe T."/>
            <person name="McCombie W.R."/>
            <person name="Paulsen I."/>
            <person name="Potashkin J."/>
            <person name="Shpakovski G.V."/>
            <person name="Ussery D."/>
            <person name="Barrell B.G."/>
            <person name="Nurse P."/>
        </authorList>
    </citation>
    <scope>NUCLEOTIDE SEQUENCE [LARGE SCALE GENOMIC DNA]</scope>
    <source>
        <strain>972 / ATCC 24843</strain>
    </source>
</reference>
<reference key="4">
    <citation type="journal article" date="1996" name="Mutat. Res.">
        <title>Analysis of spontaneous and double-strand break-induced recombination in rad mutants of S. pombe.</title>
        <authorList>
            <person name="Fortunato E.A."/>
            <person name="Osman F."/>
            <person name="Subramani S."/>
        </authorList>
    </citation>
    <scope>FUNCTION</scope>
</reference>
<reference key="5">
    <citation type="journal article" date="2003" name="J. Biol. Chem.">
        <title>Mediator influences Schizosaccharomyces pombe RNA polymerase II-dependent transcription in vitro.</title>
        <authorList>
            <person name="Spaehr H."/>
            <person name="Khorosjutina O."/>
            <person name="Baraznenok V."/>
            <person name="Linder T."/>
            <person name="Samuelsen C.O."/>
            <person name="Hermand D."/>
            <person name="Maekelae T.P."/>
            <person name="Holmberg S."/>
            <person name="Gustafsson C.M."/>
        </authorList>
    </citation>
    <scope>SUBUNIT</scope>
</reference>
<reference key="6">
    <citation type="journal article" date="2006" name="Nat. Biotechnol.">
        <title>ORFeome cloning and global analysis of protein localization in the fission yeast Schizosaccharomyces pombe.</title>
        <authorList>
            <person name="Matsuyama A."/>
            <person name="Arai R."/>
            <person name="Yashiroda Y."/>
            <person name="Shirai A."/>
            <person name="Kamata A."/>
            <person name="Sekido S."/>
            <person name="Kobayashi Y."/>
            <person name="Hashimoto A."/>
            <person name="Hamamoto M."/>
            <person name="Hiraoka Y."/>
            <person name="Horinouchi S."/>
            <person name="Yoshida M."/>
        </authorList>
    </citation>
    <scope>SUBCELLULAR LOCATION [LARGE SCALE ANALYSIS]</scope>
</reference>
<protein>
    <recommendedName>
        <fullName>General transcription and DNA repair factor IIH helicase subunit XPD</fullName>
        <shortName>TFIIH subunit XPD</shortName>
        <ecNumber evidence="1">5.6.2.3</ecNumber>
    </recommendedName>
    <alternativeName>
        <fullName evidence="12">DNA 5'-3' helicase XPD</fullName>
    </alternativeName>
    <alternativeName>
        <fullName evidence="13">DNA repair helicase RAD3 homolog</fullName>
        <shortName evidence="10">Protein rhp3</shortName>
    </alternativeName>
    <alternativeName>
        <fullName evidence="9">DNA repair helicase rad15</fullName>
    </alternativeName>
    <alternativeName>
        <fullName>RNA polymerase II transcription factor B subunit rad15</fullName>
        <shortName>TFB subunit rad15</shortName>
    </alternativeName>
</protein>
<gene>
    <name evidence="9" type="primary">rad15</name>
    <name evidence="11" type="synonym">rad5</name>
    <name evidence="10" type="synonym">rhp3</name>
    <name evidence="14" type="ORF">SPAC1D4.12</name>
</gene>
<name>RAD15_SCHPO</name>
<accession>P26659</accession>
<organism>
    <name type="scientific">Schizosaccharomyces pombe (strain 972 / ATCC 24843)</name>
    <name type="common">Fission yeast</name>
    <dbReference type="NCBI Taxonomy" id="284812"/>
    <lineage>
        <taxon>Eukaryota</taxon>
        <taxon>Fungi</taxon>
        <taxon>Dikarya</taxon>
        <taxon>Ascomycota</taxon>
        <taxon>Taphrinomycotina</taxon>
        <taxon>Schizosaccharomycetes</taxon>
        <taxon>Schizosaccharomycetales</taxon>
        <taxon>Schizosaccharomycetaceae</taxon>
        <taxon>Schizosaccharomyces</taxon>
    </lineage>
</organism>